<feature type="transit peptide" description="Chloroplast" evidence="2">
    <location>
        <begin position="1"/>
        <end position="43"/>
    </location>
</feature>
<feature type="chain" id="PRO_0000447232" description="Protein BUNDLE SHEATH DEFECTIVE 2, chloroplastic">
    <location>
        <begin position="44"/>
        <end position="129"/>
    </location>
</feature>
<feature type="zinc finger region" description="CR-type" evidence="3">
    <location>
        <begin position="49"/>
        <end position="123"/>
    </location>
</feature>
<feature type="binding site" evidence="1">
    <location>
        <position position="62"/>
    </location>
    <ligand>
        <name>Zn(2+)</name>
        <dbReference type="ChEBI" id="CHEBI:29105"/>
        <label>1</label>
    </ligand>
</feature>
<feature type="binding site" evidence="1">
    <location>
        <position position="65"/>
    </location>
    <ligand>
        <name>Zn(2+)</name>
        <dbReference type="ChEBI" id="CHEBI:29105"/>
        <label>1</label>
    </ligand>
</feature>
<feature type="binding site" evidence="1">
    <location>
        <position position="68"/>
    </location>
    <ligand>
        <name>Zn(2+)</name>
        <dbReference type="ChEBI" id="CHEBI:29105"/>
        <label>3</label>
    </ligand>
</feature>
<feature type="binding site" evidence="1">
    <location>
        <position position="73"/>
    </location>
    <ligand>
        <name>Zn(2+)</name>
        <dbReference type="ChEBI" id="CHEBI:29105"/>
        <label>2</label>
    </ligand>
</feature>
<feature type="binding site" evidence="1">
    <location>
        <position position="76"/>
    </location>
    <ligand>
        <name>Zn(2+)</name>
        <dbReference type="ChEBI" id="CHEBI:29105"/>
        <label>2</label>
    </ligand>
</feature>
<feature type="binding site" evidence="1">
    <location>
        <position position="97"/>
    </location>
    <ligand>
        <name>Zn(2+)</name>
        <dbReference type="ChEBI" id="CHEBI:29105"/>
        <label>2</label>
    </ligand>
</feature>
<feature type="binding site" evidence="1">
    <location>
        <position position="100"/>
    </location>
    <ligand>
        <name>Zn(2+)</name>
        <dbReference type="ChEBI" id="CHEBI:29105"/>
        <label>2</label>
    </ligand>
</feature>
<feature type="binding site" evidence="1">
    <location>
        <position position="105"/>
    </location>
    <ligand>
        <name>Zn(2+)</name>
        <dbReference type="ChEBI" id="CHEBI:29105"/>
        <label>3</label>
    </ligand>
</feature>
<feature type="binding site" evidence="1">
    <location>
        <position position="108"/>
    </location>
    <ligand>
        <name>Zn(2+)</name>
        <dbReference type="ChEBI" id="CHEBI:29105"/>
        <label>1</label>
    </ligand>
</feature>
<feature type="binding site" evidence="1">
    <location>
        <position position="111"/>
    </location>
    <ligand>
        <name>Zn(2+)</name>
        <dbReference type="ChEBI" id="CHEBI:29105"/>
        <label>1</label>
    </ligand>
</feature>
<feature type="sequence conflict" description="In Ref. 4; ACG28465." evidence="7" ref="4">
    <original>V</original>
    <variation>T</variation>
    <location>
        <position position="72"/>
    </location>
</feature>
<proteinExistence type="evidence at transcript level"/>
<keyword id="KW-0143">Chaperone</keyword>
<keyword id="KW-0150">Chloroplast</keyword>
<keyword id="KW-0479">Metal-binding</keyword>
<keyword id="KW-0934">Plastid</keyword>
<keyword id="KW-1185">Reference proteome</keyword>
<keyword id="KW-0677">Repeat</keyword>
<keyword id="KW-0809">Transit peptide</keyword>
<keyword id="KW-0862">Zinc</keyword>
<keyword id="KW-0863">Zinc-finger</keyword>
<evidence type="ECO:0000250" key="1">
    <source>
        <dbReference type="UniProtKB" id="Q9SN73"/>
    </source>
</evidence>
<evidence type="ECO:0000255" key="2"/>
<evidence type="ECO:0000255" key="3">
    <source>
        <dbReference type="PROSITE-ProRule" id="PRU00546"/>
    </source>
</evidence>
<evidence type="ECO:0000269" key="4">
    <source>
    </source>
</evidence>
<evidence type="ECO:0000269" key="5">
    <source>
    </source>
</evidence>
<evidence type="ECO:0000303" key="6">
    <source>
    </source>
</evidence>
<evidence type="ECO:0000305" key="7"/>
<evidence type="ECO:0000312" key="8">
    <source>
        <dbReference type="EMBL" id="AAD28599.1"/>
    </source>
</evidence>
<evidence type="ECO:0000312" key="9">
    <source>
        <dbReference type="EMBL" id="ONM01538.1"/>
    </source>
</evidence>
<evidence type="ECO:0000312" key="10">
    <source>
        <dbReference type="EMBL" id="PWZ57870.1"/>
    </source>
</evidence>
<dbReference type="EMBL" id="AF126742">
    <property type="protein sequence ID" value="AAD28599.1"/>
    <property type="molecule type" value="mRNA"/>
</dbReference>
<dbReference type="EMBL" id="CM007647">
    <property type="protein sequence ID" value="ONM01538.1"/>
    <property type="molecule type" value="Genomic_DNA"/>
</dbReference>
<dbReference type="EMBL" id="CM007647">
    <property type="protein sequence ID" value="ONM01539.1"/>
    <property type="status" value="ALT_SEQ"/>
    <property type="molecule type" value="Genomic_DNA"/>
</dbReference>
<dbReference type="EMBL" id="NCVQ01000001">
    <property type="protein sequence ID" value="PWZ57870.1"/>
    <property type="status" value="ALT_SEQ"/>
    <property type="molecule type" value="Genomic_DNA"/>
</dbReference>
<dbReference type="EMBL" id="EU956347">
    <property type="protein sequence ID" value="ACG28465.1"/>
    <property type="molecule type" value="mRNA"/>
</dbReference>
<dbReference type="RefSeq" id="NP_001105880.1">
    <property type="nucleotide sequence ID" value="NM_001112410.1"/>
</dbReference>
<dbReference type="SMR" id="Q9XF14"/>
<dbReference type="FunCoup" id="Q9XF14">
    <property type="interactions" value="2914"/>
</dbReference>
<dbReference type="STRING" id="4577.Q9XF14"/>
<dbReference type="PaxDb" id="4577-GRMZM2G062788_P01"/>
<dbReference type="EnsemblPlants" id="Zm00001eb029690_T002">
    <property type="protein sequence ID" value="Zm00001eb029690_P002"/>
    <property type="gene ID" value="Zm00001eb029690"/>
</dbReference>
<dbReference type="GeneID" id="732793"/>
<dbReference type="Gramene" id="Zm00001eb029690_T002">
    <property type="protein sequence ID" value="Zm00001eb029690_P002"/>
    <property type="gene ID" value="Zm00001eb029690"/>
</dbReference>
<dbReference type="KEGG" id="zma:732793"/>
<dbReference type="MaizeGDB" id="716010"/>
<dbReference type="eggNOG" id="ENOG502S25V">
    <property type="taxonomic scope" value="Eukaryota"/>
</dbReference>
<dbReference type="HOGENOM" id="CLU_152807_1_0_1"/>
<dbReference type="InParanoid" id="Q9XF14"/>
<dbReference type="OMA" id="GVNSEDH"/>
<dbReference type="OrthoDB" id="2019540at2759"/>
<dbReference type="Proteomes" id="UP000007305">
    <property type="component" value="Chromosome 1"/>
</dbReference>
<dbReference type="Proteomes" id="UP000251960">
    <property type="component" value="Chromosome 1"/>
</dbReference>
<dbReference type="ExpressionAtlas" id="Q9XF14">
    <property type="expression patterns" value="baseline and differential"/>
</dbReference>
<dbReference type="GO" id="GO:0009570">
    <property type="term" value="C:chloroplast stroma"/>
    <property type="evidence" value="ECO:0000314"/>
    <property type="project" value="UniProtKB"/>
</dbReference>
<dbReference type="GO" id="GO:0101031">
    <property type="term" value="C:protein folding chaperone complex"/>
    <property type="evidence" value="ECO:0000315"/>
    <property type="project" value="UniProtKB"/>
</dbReference>
<dbReference type="GO" id="GO:0044183">
    <property type="term" value="F:protein folding chaperone"/>
    <property type="evidence" value="ECO:0000315"/>
    <property type="project" value="UniProtKB"/>
</dbReference>
<dbReference type="GO" id="GO:0008270">
    <property type="term" value="F:zinc ion binding"/>
    <property type="evidence" value="ECO:0007669"/>
    <property type="project" value="UniProtKB-KW"/>
</dbReference>
<dbReference type="GO" id="GO:0061077">
    <property type="term" value="P:chaperone-mediated protein folding"/>
    <property type="evidence" value="ECO:0000315"/>
    <property type="project" value="UniProtKB"/>
</dbReference>
<dbReference type="GO" id="GO:0110102">
    <property type="term" value="P:ribulose bisphosphate carboxylase complex assembly"/>
    <property type="evidence" value="ECO:0000315"/>
    <property type="project" value="UniProtKB"/>
</dbReference>
<dbReference type="InterPro" id="IPR036410">
    <property type="entry name" value="HSP_DnaJ_Cys-rich_dom_sf"/>
</dbReference>
<dbReference type="PANTHER" id="PTHR15852">
    <property type="entry name" value="PLASTID TRANSCRIPTIONALLY ACTIVE PROTEIN"/>
    <property type="match status" value="1"/>
</dbReference>
<dbReference type="PANTHER" id="PTHR15852:SF51">
    <property type="entry name" value="PROTEIN BUNDLE SHEATH DEFECTIVE 2, CHLOROPLASTIC"/>
    <property type="match status" value="1"/>
</dbReference>
<dbReference type="Pfam" id="PF25436">
    <property type="entry name" value="BSD2_CRD"/>
    <property type="match status" value="1"/>
</dbReference>
<dbReference type="SUPFAM" id="SSF57938">
    <property type="entry name" value="DnaJ/Hsp40 cysteine-rich domain"/>
    <property type="match status" value="1"/>
</dbReference>
<protein>
    <recommendedName>
        <fullName evidence="6">Protein BUNDLE SHEATH DEFECTIVE 2, chloroplastic</fullName>
        <shortName evidence="7">ZmBSD2</shortName>
    </recommendedName>
</protein>
<accession>Q9XF14</accession>
<accession>A0A1D6KEF8</accession>
<accession>A0A317YH68</accession>
<accession>B6SUD2</accession>
<reference key="1">
    <citation type="journal article" date="1999" name="Plant Cell">
        <title>BUNDLE SHEATH DEFECTIVE2, a novel protein required for post-translational regulation of the rbcL gene of maize.</title>
        <authorList>
            <person name="Brutnell T.P."/>
            <person name="Sawers R.J."/>
            <person name="Mant A."/>
            <person name="Langdale J.A."/>
        </authorList>
    </citation>
    <scope>NUCLEOTIDE SEQUENCE [MRNA]</scope>
    <scope>FUNCTION</scope>
    <scope>DISRUPTION PHENOTYPE</scope>
    <scope>SUBCELLULAR LOCATION</scope>
    <scope>TISSUE SPECIFICITY</scope>
    <source>
        <strain>cv. B73</strain>
    </source>
</reference>
<reference key="2">
    <citation type="journal article" date="2009" name="Science">
        <title>The B73 maize genome: complexity, diversity, and dynamics.</title>
        <authorList>
            <person name="Schnable P.S."/>
            <person name="Ware D."/>
            <person name="Fulton R.S."/>
            <person name="Stein J.C."/>
            <person name="Wei F."/>
            <person name="Pasternak S."/>
            <person name="Liang C."/>
            <person name="Zhang J."/>
            <person name="Fulton L."/>
            <person name="Graves T.A."/>
            <person name="Minx P."/>
            <person name="Reily A.D."/>
            <person name="Courtney L."/>
            <person name="Kruchowski S.S."/>
            <person name="Tomlinson C."/>
            <person name="Strong C."/>
            <person name="Delehaunty K."/>
            <person name="Fronick C."/>
            <person name="Courtney B."/>
            <person name="Rock S.M."/>
            <person name="Belter E."/>
            <person name="Du F."/>
            <person name="Kim K."/>
            <person name="Abbott R.M."/>
            <person name="Cotton M."/>
            <person name="Levy A."/>
            <person name="Marchetto P."/>
            <person name="Ochoa K."/>
            <person name="Jackson S.M."/>
            <person name="Gillam B."/>
            <person name="Chen W."/>
            <person name="Yan L."/>
            <person name="Higginbotham J."/>
            <person name="Cardenas M."/>
            <person name="Waligorski J."/>
            <person name="Applebaum E."/>
            <person name="Phelps L."/>
            <person name="Falcone J."/>
            <person name="Kanchi K."/>
            <person name="Thane T."/>
            <person name="Scimone A."/>
            <person name="Thane N."/>
            <person name="Henke J."/>
            <person name="Wang T."/>
            <person name="Ruppert J."/>
            <person name="Shah N."/>
            <person name="Rotter K."/>
            <person name="Hodges J."/>
            <person name="Ingenthron E."/>
            <person name="Cordes M."/>
            <person name="Kohlberg S."/>
            <person name="Sgro J."/>
            <person name="Delgado B."/>
            <person name="Mead K."/>
            <person name="Chinwalla A."/>
            <person name="Leonard S."/>
            <person name="Crouse K."/>
            <person name="Collura K."/>
            <person name="Kudrna D."/>
            <person name="Currie J."/>
            <person name="He R."/>
            <person name="Angelova A."/>
            <person name="Rajasekar S."/>
            <person name="Mueller T."/>
            <person name="Lomeli R."/>
            <person name="Scara G."/>
            <person name="Ko A."/>
            <person name="Delaney K."/>
            <person name="Wissotski M."/>
            <person name="Lopez G."/>
            <person name="Campos D."/>
            <person name="Braidotti M."/>
            <person name="Ashley E."/>
            <person name="Golser W."/>
            <person name="Kim H."/>
            <person name="Lee S."/>
            <person name="Lin J."/>
            <person name="Dujmic Z."/>
            <person name="Kim W."/>
            <person name="Talag J."/>
            <person name="Zuccolo A."/>
            <person name="Fan C."/>
            <person name="Sebastian A."/>
            <person name="Kramer M."/>
            <person name="Spiegel L."/>
            <person name="Nascimento L."/>
            <person name="Zutavern T."/>
            <person name="Miller B."/>
            <person name="Ambroise C."/>
            <person name="Muller S."/>
            <person name="Spooner W."/>
            <person name="Narechania A."/>
            <person name="Ren L."/>
            <person name="Wei S."/>
            <person name="Kumari S."/>
            <person name="Faga B."/>
            <person name="Levy M.J."/>
            <person name="McMahan L."/>
            <person name="Van Buren P."/>
            <person name="Vaughn M.W."/>
            <person name="Ying K."/>
            <person name="Yeh C.-T."/>
            <person name="Emrich S.J."/>
            <person name="Jia Y."/>
            <person name="Kalyanaraman A."/>
            <person name="Hsia A.-P."/>
            <person name="Barbazuk W.B."/>
            <person name="Baucom R.S."/>
            <person name="Brutnell T.P."/>
            <person name="Carpita N.C."/>
            <person name="Chaparro C."/>
            <person name="Chia J.-M."/>
            <person name="Deragon J.-M."/>
            <person name="Estill J.C."/>
            <person name="Fu Y."/>
            <person name="Jeddeloh J.A."/>
            <person name="Han Y."/>
            <person name="Lee H."/>
            <person name="Li P."/>
            <person name="Lisch D.R."/>
            <person name="Liu S."/>
            <person name="Liu Z."/>
            <person name="Nagel D.H."/>
            <person name="McCann M.C."/>
            <person name="SanMiguel P."/>
            <person name="Myers A.M."/>
            <person name="Nettleton D."/>
            <person name="Nguyen J."/>
            <person name="Penning B.W."/>
            <person name="Ponnala L."/>
            <person name="Schneider K.L."/>
            <person name="Schwartz D.C."/>
            <person name="Sharma A."/>
            <person name="Soderlund C."/>
            <person name="Springer N.M."/>
            <person name="Sun Q."/>
            <person name="Wang H."/>
            <person name="Waterman M."/>
            <person name="Westerman R."/>
            <person name="Wolfgruber T.K."/>
            <person name="Yang L."/>
            <person name="Yu Y."/>
            <person name="Zhang L."/>
            <person name="Zhou S."/>
            <person name="Zhu Q."/>
            <person name="Bennetzen J.L."/>
            <person name="Dawe R.K."/>
            <person name="Jiang J."/>
            <person name="Jiang N."/>
            <person name="Presting G.G."/>
            <person name="Wessler S.R."/>
            <person name="Aluru S."/>
            <person name="Martienssen R.A."/>
            <person name="Clifton S.W."/>
            <person name="McCombie W.R."/>
            <person name="Wing R.A."/>
            <person name="Wilson R.K."/>
        </authorList>
    </citation>
    <scope>NUCLEOTIDE SEQUENCE [LARGE SCALE GENOMIC DNA]</scope>
    <source>
        <strain>cv. B73</strain>
        <tissue>Seedling</tissue>
    </source>
</reference>
<reference key="3">
    <citation type="journal article" date="2018" name="Nat. Genet.">
        <title>Extensive intraspecific gene order and gene structural variations between Mo17 and other maize genomes.</title>
        <authorList>
            <person name="Sun S."/>
            <person name="Zhou Y."/>
            <person name="Chen J."/>
            <person name="Shi J."/>
            <person name="Zhao H."/>
            <person name="Zhao H."/>
            <person name="Song W."/>
            <person name="Zhang M."/>
            <person name="Cui Y."/>
            <person name="Dong X."/>
            <person name="Liu H."/>
            <person name="Ma X."/>
            <person name="Jiao Y."/>
            <person name="Wang B."/>
            <person name="Wei X."/>
            <person name="Stein J.C."/>
            <person name="Glaubitz J.C."/>
            <person name="Lu F."/>
            <person name="Yu G."/>
            <person name="Liang C."/>
            <person name="Fengler K."/>
            <person name="Li B."/>
            <person name="Rafalski A."/>
            <person name="Schnable P.S."/>
            <person name="Ware D.H."/>
            <person name="Buckler E.S."/>
            <person name="Lai J."/>
        </authorList>
    </citation>
    <scope>NUCLEOTIDE SEQUENCE [LARGE SCALE GENOMIC DNA]</scope>
    <source>
        <strain>cv. Missouri 17</strain>
        <tissue>Seedling</tissue>
    </source>
</reference>
<reference key="4">
    <citation type="journal article" date="2009" name="Plant Mol. Biol.">
        <title>Insights into corn genes derived from large-scale cDNA sequencing.</title>
        <authorList>
            <person name="Alexandrov N.N."/>
            <person name="Brover V.V."/>
            <person name="Freidin S."/>
            <person name="Troukhan M.E."/>
            <person name="Tatarinova T.V."/>
            <person name="Zhang H."/>
            <person name="Swaller T.J."/>
            <person name="Lu Y.-P."/>
            <person name="Bouck J."/>
            <person name="Flavell R.B."/>
            <person name="Feldmann K.A."/>
        </authorList>
    </citation>
    <scope>NUCLEOTIDE SEQUENCE [LARGE SCALE MRNA]</scope>
</reference>
<reference key="5">
    <citation type="journal article" date="1996" name="Plant Cell">
        <title>bundle sheath defective2, a Mutation That Disrupts the Coordinated Development of Bundle Sheath and Mesophyll Cells in the Maize Leaf.</title>
        <authorList>
            <person name="Roth R."/>
            <person name="Hall L.N."/>
            <person name="Brutnell T.P."/>
            <person name="Langdale J.A."/>
        </authorList>
    </citation>
    <scope>FUNCTION</scope>
    <scope>DISRUPTION PHENOTYPE</scope>
</reference>
<organism>
    <name type="scientific">Zea mays</name>
    <name type="common">Maize</name>
    <dbReference type="NCBI Taxonomy" id="4577"/>
    <lineage>
        <taxon>Eukaryota</taxon>
        <taxon>Viridiplantae</taxon>
        <taxon>Streptophyta</taxon>
        <taxon>Embryophyta</taxon>
        <taxon>Tracheophyta</taxon>
        <taxon>Spermatophyta</taxon>
        <taxon>Magnoliopsida</taxon>
        <taxon>Liliopsida</taxon>
        <taxon>Poales</taxon>
        <taxon>Poaceae</taxon>
        <taxon>PACMAD clade</taxon>
        <taxon>Panicoideae</taxon>
        <taxon>Andropogonodae</taxon>
        <taxon>Andropogoneae</taxon>
        <taxon>Tripsacinae</taxon>
        <taxon>Zea</taxon>
    </lineage>
</organism>
<gene>
    <name evidence="8" type="primary">BSD2</name>
    <name evidence="9" type="ORF">ZEAMMB73_Zm00001d030786</name>
    <name evidence="10" type="ORF">Zm00014a_034282</name>
</gene>
<name>BSD2_MAIZE</name>
<comment type="function">
    <text evidence="1 4 5">Chloroplast chaperone required for RuBisCo complex biogenesis and translational regulation of the RuBisCo large subunit (RbcL) (PubMed:10330470, PubMed:12239405). Stabilizes an end-state assembly intermediate of eight RbcL subunits until the small subunits (RBCSs) become available to produce a complete stable RuBisCo complex containing eight small and eight large subunits (By similarity). Involved in the differentiation of bundle sheath cells, especially chloroplast structure (PubMed:12239405).</text>
</comment>
<comment type="subunit">
    <text evidence="1">Interacts with the RuBisCo large subunit (RbcL) assembled as an intermediate complex made of eight RbcL and eight BSD2 subunits.</text>
</comment>
<comment type="subcellular location">
    <subcellularLocation>
        <location evidence="4">Plastid</location>
        <location evidence="4">Chloroplast stroma</location>
    </subcellularLocation>
    <text evidence="4">Associates with chloroplastic polysomes.</text>
</comment>
<comment type="tissue specificity">
    <text evidence="4">Expressed in shoot tissues, in both bundle sheath and mesophyll cells.</text>
</comment>
<comment type="developmental stage">
    <text evidence="4">Relatively abundant in etiolated, light-shifted, and young (plastochron 1 to 5) leaves.</text>
</comment>
<comment type="disruption phenotype">
    <text evidence="4 5">Mu-active bsd2-m1 mutants are specifically disrupted C4 differentiation in bundle sheath cells with reduced levels of bundle sheath cell-specific photosynthetic enzymes and aberrant bundle sheath chloroplast structure and altered RuBisCo complex formation (PubMed:12239405). Ectopic accumulation of RuBisCo large subunit (RbcL) in mesophyll cells (PubMed:12239405). Reduced accumulation in Mu-inactivated bsd2-m1 mutants exhibiting slightly pale green and grainy leaves (due to the random presence of altered bundle sheath cell chloroplasts) associated with the loss of RuBisCo complex formation, but accumulation of chloroplast-encoded RbcL transcripts associated with polysomes in both bundle sheath and mesophyll cells (PubMed:10330470). RbcL transcription is abnormally similar in both dark-grown and light-shifted seedlings (PubMed:10330470).</text>
</comment>
<comment type="similarity">
    <text evidence="7">Belongs to the BSD2 chaperone family.</text>
</comment>
<comment type="sequence caution" evidence="7">
    <conflict type="erroneous gene model prediction">
        <sequence resource="EMBL-CDS" id="ONM01539"/>
    </conflict>
</comment>
<comment type="sequence caution" evidence="7">
    <conflict type="erroneous gene model prediction">
        <sequence resource="EMBL-CDS" id="PWZ57870"/>
    </conflict>
</comment>
<sequence length="129" mass="13719">MAATASLTTTAPSPPALLKASAPLLISFRPVSRHCKNLCIKTKATENDQSAKKHQKVKSILCQDCEGNGAIVCTKCEGNGVNSVDYFEGRFKAGSLCWLCRGKREILCGNCNGAGFLGGFLSTFDETAQ</sequence>